<protein>
    <recommendedName>
        <fullName evidence="1">ATP-dependent Clp protease proteolytic subunit</fullName>
        <ecNumber evidence="1">3.4.21.92</ecNumber>
    </recommendedName>
    <alternativeName>
        <fullName evidence="1">Endopeptidase Clp</fullName>
    </alternativeName>
</protein>
<sequence>MSLVPVVVEQTNRGERSYDIYSRLLKDRIIMLSEEVNDTTASLIVAQLLFLEAEDPDKDIHLYINSPGGSITSGMAIYDTMQYIKPDVSTICVGMAASMGAFLLAAGAKGKRYALPNSEVMIHQPLGGFRGQATDIGIHAERILKMKKKLNTILSDRTGKPLEQVELDTERDHFLSAEEAKEYGLIDEVIDKKK</sequence>
<keyword id="KW-0963">Cytoplasm</keyword>
<keyword id="KW-0378">Hydrolase</keyword>
<keyword id="KW-0645">Protease</keyword>
<keyword id="KW-0720">Serine protease</keyword>
<reference key="1">
    <citation type="submission" date="2008-10" db="EMBL/GenBank/DDBJ databases">
        <title>Genome sequence of Clostridium botulinum A2 Kyoto.</title>
        <authorList>
            <person name="Shrivastava S."/>
            <person name="Brinkac L.M."/>
            <person name="Brown J.L."/>
            <person name="Bruce D."/>
            <person name="Detter C.C."/>
            <person name="Johnson E.A."/>
            <person name="Munk C.A."/>
            <person name="Smith L.A."/>
            <person name="Smith T.J."/>
            <person name="Sutton G."/>
            <person name="Brettin T.S."/>
        </authorList>
    </citation>
    <scope>NUCLEOTIDE SEQUENCE [LARGE SCALE GENOMIC DNA]</scope>
    <source>
        <strain>Kyoto / Type A2</strain>
    </source>
</reference>
<feature type="chain" id="PRO_1000135150" description="ATP-dependent Clp protease proteolytic subunit">
    <location>
        <begin position="1"/>
        <end position="194"/>
    </location>
</feature>
<feature type="active site" description="Nucleophile" evidence="1">
    <location>
        <position position="98"/>
    </location>
</feature>
<feature type="active site" evidence="1">
    <location>
        <position position="123"/>
    </location>
</feature>
<proteinExistence type="inferred from homology"/>
<accession>C1FLA6</accession>
<gene>
    <name evidence="1" type="primary">clpP</name>
    <name type="ordered locus">CLM_3643</name>
</gene>
<dbReference type="EC" id="3.4.21.92" evidence="1"/>
<dbReference type="EMBL" id="CP001581">
    <property type="protein sequence ID" value="ACO85626.1"/>
    <property type="molecule type" value="Genomic_DNA"/>
</dbReference>
<dbReference type="RefSeq" id="WP_003357557.1">
    <property type="nucleotide sequence ID" value="NC_012563.1"/>
</dbReference>
<dbReference type="SMR" id="C1FLA6"/>
<dbReference type="MEROPS" id="S14.001"/>
<dbReference type="GeneID" id="5187372"/>
<dbReference type="KEGG" id="cby:CLM_3643"/>
<dbReference type="eggNOG" id="COG0740">
    <property type="taxonomic scope" value="Bacteria"/>
</dbReference>
<dbReference type="HOGENOM" id="CLU_058707_3_2_9"/>
<dbReference type="Proteomes" id="UP000001374">
    <property type="component" value="Chromosome"/>
</dbReference>
<dbReference type="GO" id="GO:0005737">
    <property type="term" value="C:cytoplasm"/>
    <property type="evidence" value="ECO:0007669"/>
    <property type="project" value="UniProtKB-SubCell"/>
</dbReference>
<dbReference type="GO" id="GO:0009368">
    <property type="term" value="C:endopeptidase Clp complex"/>
    <property type="evidence" value="ECO:0007669"/>
    <property type="project" value="TreeGrafter"/>
</dbReference>
<dbReference type="GO" id="GO:0004176">
    <property type="term" value="F:ATP-dependent peptidase activity"/>
    <property type="evidence" value="ECO:0007669"/>
    <property type="project" value="InterPro"/>
</dbReference>
<dbReference type="GO" id="GO:0051117">
    <property type="term" value="F:ATPase binding"/>
    <property type="evidence" value="ECO:0007669"/>
    <property type="project" value="TreeGrafter"/>
</dbReference>
<dbReference type="GO" id="GO:0004252">
    <property type="term" value="F:serine-type endopeptidase activity"/>
    <property type="evidence" value="ECO:0007669"/>
    <property type="project" value="UniProtKB-UniRule"/>
</dbReference>
<dbReference type="GO" id="GO:0006515">
    <property type="term" value="P:protein quality control for misfolded or incompletely synthesized proteins"/>
    <property type="evidence" value="ECO:0007669"/>
    <property type="project" value="TreeGrafter"/>
</dbReference>
<dbReference type="CDD" id="cd07017">
    <property type="entry name" value="S14_ClpP_2"/>
    <property type="match status" value="1"/>
</dbReference>
<dbReference type="FunFam" id="3.90.226.10:FF:000001">
    <property type="entry name" value="ATP-dependent Clp protease proteolytic subunit"/>
    <property type="match status" value="1"/>
</dbReference>
<dbReference type="Gene3D" id="3.90.226.10">
    <property type="entry name" value="2-enoyl-CoA Hydratase, Chain A, domain 1"/>
    <property type="match status" value="1"/>
</dbReference>
<dbReference type="HAMAP" id="MF_00444">
    <property type="entry name" value="ClpP"/>
    <property type="match status" value="1"/>
</dbReference>
<dbReference type="InterPro" id="IPR001907">
    <property type="entry name" value="ClpP"/>
</dbReference>
<dbReference type="InterPro" id="IPR029045">
    <property type="entry name" value="ClpP/crotonase-like_dom_sf"/>
</dbReference>
<dbReference type="InterPro" id="IPR023562">
    <property type="entry name" value="ClpP/TepA"/>
</dbReference>
<dbReference type="InterPro" id="IPR033135">
    <property type="entry name" value="ClpP_His_AS"/>
</dbReference>
<dbReference type="InterPro" id="IPR018215">
    <property type="entry name" value="ClpP_Ser_AS"/>
</dbReference>
<dbReference type="NCBIfam" id="TIGR00493">
    <property type="entry name" value="clpP"/>
    <property type="match status" value="1"/>
</dbReference>
<dbReference type="NCBIfam" id="NF001368">
    <property type="entry name" value="PRK00277.1"/>
    <property type="match status" value="1"/>
</dbReference>
<dbReference type="NCBIfam" id="NF009205">
    <property type="entry name" value="PRK12553.1"/>
    <property type="match status" value="1"/>
</dbReference>
<dbReference type="PANTHER" id="PTHR10381">
    <property type="entry name" value="ATP-DEPENDENT CLP PROTEASE PROTEOLYTIC SUBUNIT"/>
    <property type="match status" value="1"/>
</dbReference>
<dbReference type="PANTHER" id="PTHR10381:SF70">
    <property type="entry name" value="ATP-DEPENDENT CLP PROTEASE PROTEOLYTIC SUBUNIT"/>
    <property type="match status" value="1"/>
</dbReference>
<dbReference type="Pfam" id="PF00574">
    <property type="entry name" value="CLP_protease"/>
    <property type="match status" value="1"/>
</dbReference>
<dbReference type="PRINTS" id="PR00127">
    <property type="entry name" value="CLPPROTEASEP"/>
</dbReference>
<dbReference type="SUPFAM" id="SSF52096">
    <property type="entry name" value="ClpP/crotonase"/>
    <property type="match status" value="1"/>
</dbReference>
<dbReference type="PROSITE" id="PS00382">
    <property type="entry name" value="CLP_PROTEASE_HIS"/>
    <property type="match status" value="1"/>
</dbReference>
<dbReference type="PROSITE" id="PS00381">
    <property type="entry name" value="CLP_PROTEASE_SER"/>
    <property type="match status" value="1"/>
</dbReference>
<name>CLPP_CLOBJ</name>
<comment type="function">
    <text evidence="1">Cleaves peptides in various proteins in a process that requires ATP hydrolysis. Has a chymotrypsin-like activity. Plays a major role in the degradation of misfolded proteins.</text>
</comment>
<comment type="catalytic activity">
    <reaction evidence="1">
        <text>Hydrolysis of proteins to small peptides in the presence of ATP and magnesium. alpha-casein is the usual test substrate. In the absence of ATP, only oligopeptides shorter than five residues are hydrolyzed (such as succinyl-Leu-Tyr-|-NHMec, and Leu-Tyr-Leu-|-Tyr-Trp, in which cleavage of the -Tyr-|-Leu- and -Tyr-|-Trp bonds also occurs).</text>
        <dbReference type="EC" id="3.4.21.92"/>
    </reaction>
</comment>
<comment type="subunit">
    <text evidence="1">Fourteen ClpP subunits assemble into 2 heptameric rings which stack back to back to give a disk-like structure with a central cavity, resembling the structure of eukaryotic proteasomes.</text>
</comment>
<comment type="subcellular location">
    <subcellularLocation>
        <location evidence="1">Cytoplasm</location>
    </subcellularLocation>
</comment>
<comment type="similarity">
    <text evidence="1">Belongs to the peptidase S14 family.</text>
</comment>
<evidence type="ECO:0000255" key="1">
    <source>
        <dbReference type="HAMAP-Rule" id="MF_00444"/>
    </source>
</evidence>
<organism>
    <name type="scientific">Clostridium botulinum (strain Kyoto / Type A2)</name>
    <dbReference type="NCBI Taxonomy" id="536232"/>
    <lineage>
        <taxon>Bacteria</taxon>
        <taxon>Bacillati</taxon>
        <taxon>Bacillota</taxon>
        <taxon>Clostridia</taxon>
        <taxon>Eubacteriales</taxon>
        <taxon>Clostridiaceae</taxon>
        <taxon>Clostridium</taxon>
    </lineage>
</organism>